<accession>B7HEF6</accession>
<name>Y5274_BACC4</name>
<keyword id="KW-0067">ATP-binding</keyword>
<keyword id="KW-0342">GTP-binding</keyword>
<keyword id="KW-0547">Nucleotide-binding</keyword>
<comment type="function">
    <text evidence="1">Displays ATPase and GTPase activities.</text>
</comment>
<comment type="similarity">
    <text evidence="1">Belongs to the RapZ-like family.</text>
</comment>
<dbReference type="EMBL" id="CP001176">
    <property type="protein sequence ID" value="ACK60985.1"/>
    <property type="molecule type" value="Genomic_DNA"/>
</dbReference>
<dbReference type="SMR" id="B7HEF6"/>
<dbReference type="KEGG" id="bcb:BCB4264_A5274"/>
<dbReference type="HOGENOM" id="CLU_059558_0_0_9"/>
<dbReference type="Proteomes" id="UP000007096">
    <property type="component" value="Chromosome"/>
</dbReference>
<dbReference type="GO" id="GO:0005524">
    <property type="term" value="F:ATP binding"/>
    <property type="evidence" value="ECO:0007669"/>
    <property type="project" value="UniProtKB-UniRule"/>
</dbReference>
<dbReference type="GO" id="GO:0005525">
    <property type="term" value="F:GTP binding"/>
    <property type="evidence" value="ECO:0007669"/>
    <property type="project" value="UniProtKB-UniRule"/>
</dbReference>
<dbReference type="Gene3D" id="3.40.50.300">
    <property type="entry name" value="P-loop containing nucleotide triphosphate hydrolases"/>
    <property type="match status" value="1"/>
</dbReference>
<dbReference type="HAMAP" id="MF_00636">
    <property type="entry name" value="RapZ_like"/>
    <property type="match status" value="1"/>
</dbReference>
<dbReference type="InterPro" id="IPR027417">
    <property type="entry name" value="P-loop_NTPase"/>
</dbReference>
<dbReference type="InterPro" id="IPR005337">
    <property type="entry name" value="RapZ-like"/>
</dbReference>
<dbReference type="InterPro" id="IPR053930">
    <property type="entry name" value="RapZ-like_N"/>
</dbReference>
<dbReference type="InterPro" id="IPR053931">
    <property type="entry name" value="RapZ_C"/>
</dbReference>
<dbReference type="NCBIfam" id="NF003828">
    <property type="entry name" value="PRK05416.1"/>
    <property type="match status" value="1"/>
</dbReference>
<dbReference type="PANTHER" id="PTHR30448">
    <property type="entry name" value="RNASE ADAPTER PROTEIN RAPZ"/>
    <property type="match status" value="1"/>
</dbReference>
<dbReference type="PANTHER" id="PTHR30448:SF0">
    <property type="entry name" value="RNASE ADAPTER PROTEIN RAPZ"/>
    <property type="match status" value="1"/>
</dbReference>
<dbReference type="Pfam" id="PF22740">
    <property type="entry name" value="PapZ_C"/>
    <property type="match status" value="1"/>
</dbReference>
<dbReference type="Pfam" id="PF03668">
    <property type="entry name" value="RapZ-like_N"/>
    <property type="match status" value="1"/>
</dbReference>
<dbReference type="PIRSF" id="PIRSF005052">
    <property type="entry name" value="P-loopkin"/>
    <property type="match status" value="1"/>
</dbReference>
<dbReference type="SUPFAM" id="SSF52540">
    <property type="entry name" value="P-loop containing nucleoside triphosphate hydrolases"/>
    <property type="match status" value="1"/>
</dbReference>
<organism>
    <name type="scientific">Bacillus cereus (strain B4264)</name>
    <dbReference type="NCBI Taxonomy" id="405532"/>
    <lineage>
        <taxon>Bacteria</taxon>
        <taxon>Bacillati</taxon>
        <taxon>Bacillota</taxon>
        <taxon>Bacilli</taxon>
        <taxon>Bacillales</taxon>
        <taxon>Bacillaceae</taxon>
        <taxon>Bacillus</taxon>
        <taxon>Bacillus cereus group</taxon>
    </lineage>
</organism>
<feature type="chain" id="PRO_1000130732" description="Nucleotide-binding protein BCB4264_A5274">
    <location>
        <begin position="1"/>
        <end position="293"/>
    </location>
</feature>
<feature type="binding site" evidence="1">
    <location>
        <begin position="14"/>
        <end position="21"/>
    </location>
    <ligand>
        <name>ATP</name>
        <dbReference type="ChEBI" id="CHEBI:30616"/>
    </ligand>
</feature>
<feature type="binding site" evidence="1">
    <location>
        <begin position="65"/>
        <end position="68"/>
    </location>
    <ligand>
        <name>GTP</name>
        <dbReference type="ChEBI" id="CHEBI:37565"/>
    </ligand>
</feature>
<gene>
    <name type="ordered locus">BCB4264_A5274</name>
</gene>
<protein>
    <recommendedName>
        <fullName evidence="1">Nucleotide-binding protein BCB4264_A5274</fullName>
    </recommendedName>
</protein>
<sequence length="293" mass="33446">MTENNDIKMVIITGMSGAGKTVALQSFEDLGYFCVDNLPPMLLPKFIELMADSKGKMNKVALGIDLRGREFFEHLWGALDDLSERTWIIPHILFLDAKDSTLVTRYKETRRSHPLAPTGLPLKGIEAERNLLTDMKARANIVLDTSDLKPKELREKIVHLFSTETEQAFRVNVMSFGFKYGIPIDADLVFDVRFLPNPYYIPHMKPLTGLDEEVSSYVLKFNETHKFLEKLTDLITFMLPHYKREGKSQLVIAIGCTGGQHRSVTLTEYLGKHLKPEYSVHVSHRDVEKRKGH</sequence>
<proteinExistence type="inferred from homology"/>
<reference key="1">
    <citation type="submission" date="2008-10" db="EMBL/GenBank/DDBJ databases">
        <title>Genome sequence of Bacillus cereus B4264.</title>
        <authorList>
            <person name="Dodson R.J."/>
            <person name="Durkin A.S."/>
            <person name="Rosovitz M.J."/>
            <person name="Rasko D.A."/>
            <person name="Hoffmaster A."/>
            <person name="Ravel J."/>
            <person name="Sutton G."/>
        </authorList>
    </citation>
    <scope>NUCLEOTIDE SEQUENCE [LARGE SCALE GENOMIC DNA]</scope>
    <source>
        <strain>B4264</strain>
    </source>
</reference>
<evidence type="ECO:0000255" key="1">
    <source>
        <dbReference type="HAMAP-Rule" id="MF_00636"/>
    </source>
</evidence>